<evidence type="ECO:0000255" key="1">
    <source>
        <dbReference type="PROSITE-ProRule" id="PRU00108"/>
    </source>
</evidence>
<evidence type="ECO:0000305" key="2"/>
<name>HD2_ENCCU</name>
<feature type="chain" id="PRO_0000048911" description="Homeobox protein HD-2">
    <location>
        <begin position="1"/>
        <end position="189"/>
    </location>
</feature>
<feature type="DNA-binding region" description="Homeobox; TALE-type" evidence="1">
    <location>
        <begin position="119"/>
        <end position="181"/>
    </location>
</feature>
<dbReference type="EMBL" id="AL590449">
    <property type="protein sequence ID" value="CAD25867.2"/>
    <property type="molecule type" value="Genomic_DNA"/>
</dbReference>
<dbReference type="EMBL" id="BK001337">
    <property type="protein sequence ID" value="DAA01300.1"/>
    <property type="status" value="ALT_INIT"/>
    <property type="molecule type" value="Genomic_DNA"/>
</dbReference>
<dbReference type="RefSeq" id="NP_586263.1">
    <property type="nucleotide sequence ID" value="NM_001042096.1"/>
</dbReference>
<dbReference type="SMR" id="Q8SR09"/>
<dbReference type="STRING" id="284813.Q8SR09"/>
<dbReference type="GeneID" id="859914"/>
<dbReference type="KEGG" id="ecu:ECU10_1480"/>
<dbReference type="VEuPathDB" id="MicrosporidiaDB:ECU10_1480"/>
<dbReference type="HOGENOM" id="CLU_106819_0_0_1"/>
<dbReference type="InParanoid" id="Q8SR09"/>
<dbReference type="OrthoDB" id="10056939at2759"/>
<dbReference type="Proteomes" id="UP000000819">
    <property type="component" value="Chromosome X"/>
</dbReference>
<dbReference type="GO" id="GO:0005634">
    <property type="term" value="C:nucleus"/>
    <property type="evidence" value="ECO:0007669"/>
    <property type="project" value="UniProtKB-SubCell"/>
</dbReference>
<dbReference type="GO" id="GO:0003677">
    <property type="term" value="F:DNA binding"/>
    <property type="evidence" value="ECO:0007669"/>
    <property type="project" value="UniProtKB-KW"/>
</dbReference>
<dbReference type="GO" id="GO:0006355">
    <property type="term" value="P:regulation of DNA-templated transcription"/>
    <property type="evidence" value="ECO:0007669"/>
    <property type="project" value="InterPro"/>
</dbReference>
<dbReference type="CDD" id="cd00086">
    <property type="entry name" value="homeodomain"/>
    <property type="match status" value="1"/>
</dbReference>
<dbReference type="Gene3D" id="1.10.10.60">
    <property type="entry name" value="Homeodomain-like"/>
    <property type="match status" value="1"/>
</dbReference>
<dbReference type="InterPro" id="IPR001356">
    <property type="entry name" value="HD"/>
</dbReference>
<dbReference type="InterPro" id="IPR009057">
    <property type="entry name" value="Homeodomain-like_sf"/>
</dbReference>
<dbReference type="InterPro" id="IPR008422">
    <property type="entry name" value="KN_HD"/>
</dbReference>
<dbReference type="InterPro" id="IPR050224">
    <property type="entry name" value="TALE_homeobox"/>
</dbReference>
<dbReference type="PANTHER" id="PTHR11850">
    <property type="entry name" value="HOMEOBOX PROTEIN TRANSCRIPTION FACTORS"/>
    <property type="match status" value="1"/>
</dbReference>
<dbReference type="Pfam" id="PF05920">
    <property type="entry name" value="Homeobox_KN"/>
    <property type="match status" value="1"/>
</dbReference>
<dbReference type="SMART" id="SM00389">
    <property type="entry name" value="HOX"/>
    <property type="match status" value="1"/>
</dbReference>
<dbReference type="SUPFAM" id="SSF46689">
    <property type="entry name" value="Homeodomain-like"/>
    <property type="match status" value="1"/>
</dbReference>
<dbReference type="PROSITE" id="PS50071">
    <property type="entry name" value="HOMEOBOX_2"/>
    <property type="match status" value="1"/>
</dbReference>
<proteinExistence type="inferred from homology"/>
<sequence>MNIIMGILDQAVSAEEGYFAGGASRKSLMEEMRRIRSKYKATVFGDSGREGMKFKMALLFVLKRVKQKIILEDRLMEVIDSEVAYIIGCVKSITSEPIRVGTVEAVRPIQHEAEHKCAKPRTRANFPMDTSQLLRSWLKENMDNPYPSDAEKAYLCQKTGLGPAQINNWFINARRRILPFMKGKCSNFK</sequence>
<gene>
    <name type="primary">HD-2</name>
    <name type="ordered locus">ECU10_1480</name>
</gene>
<reference key="1">
    <citation type="journal article" date="2001" name="Nature">
        <title>Genome sequence and gene compaction of the eukaryote parasite Encephalitozoon cuniculi.</title>
        <authorList>
            <person name="Katinka M.D."/>
            <person name="Duprat S."/>
            <person name="Cornillot E."/>
            <person name="Metenier G."/>
            <person name="Thomarat F."/>
            <person name="Prensier G."/>
            <person name="Barbe V."/>
            <person name="Peyretaillade E."/>
            <person name="Brottier P."/>
            <person name="Wincker P."/>
            <person name="Delbac F."/>
            <person name="El Alaoui H."/>
            <person name="Peyret P."/>
            <person name="Saurin W."/>
            <person name="Gouy M."/>
            <person name="Weissenbach J."/>
            <person name="Vivares C.P."/>
        </authorList>
    </citation>
    <scope>NUCLEOTIDE SEQUENCE [LARGE SCALE GENOMIC DNA]</scope>
    <source>
        <strain>GB-M1</strain>
    </source>
</reference>
<reference key="2">
    <citation type="journal article" date="2009" name="BMC Genomics">
        <title>Identification of transcriptional signals in Encephalitozoon cuniculi widespread among Microsporidia phylum: support for accurate structural genome annotation.</title>
        <authorList>
            <person name="Peyretaillade E."/>
            <person name="Goncalves O."/>
            <person name="Terrat S."/>
            <person name="Dugat-Bony E."/>
            <person name="Wincker P."/>
            <person name="Cornman R.S."/>
            <person name="Evans J.D."/>
            <person name="Delbac F."/>
            <person name="Peyret P."/>
        </authorList>
    </citation>
    <scope>GENOME REANNOTATION</scope>
    <source>
        <strain>GB-M1</strain>
    </source>
</reference>
<reference key="3">
    <citation type="journal article" date="2003" name="Dev. Genes Evol.">
        <title>The homeobox genes of Encephalitozoon cuniculi (Microsporidia) reveal a putative mating-type locus.</title>
        <authorList>
            <person name="Buerglin T.R."/>
        </authorList>
    </citation>
    <scope>DISCUSSION OF SEQUENCE</scope>
</reference>
<comment type="subcellular location">
    <subcellularLocation>
        <location evidence="1">Nucleus</location>
    </subcellularLocation>
</comment>
<comment type="similarity">
    <text evidence="2">Belongs to the TALE/KNOX homeobox family.</text>
</comment>
<comment type="sequence caution" evidence="2">
    <conflict type="erroneous initiation">
        <sequence resource="EMBL-CDS" id="DAA01300"/>
    </conflict>
    <text>Extended N-terminus.</text>
</comment>
<accession>Q8SR09</accession>
<accession>Q7SI92</accession>
<protein>
    <recommendedName>
        <fullName>Homeobox protein HD-2</fullName>
    </recommendedName>
    <alternativeName>
        <fullName>EcHD-2</fullName>
    </alternativeName>
</protein>
<keyword id="KW-0238">DNA-binding</keyword>
<keyword id="KW-0371">Homeobox</keyword>
<keyword id="KW-0539">Nucleus</keyword>
<keyword id="KW-1185">Reference proteome</keyword>
<organism>
    <name type="scientific">Encephalitozoon cuniculi (strain GB-M1)</name>
    <name type="common">Microsporidian parasite</name>
    <dbReference type="NCBI Taxonomy" id="284813"/>
    <lineage>
        <taxon>Eukaryota</taxon>
        <taxon>Fungi</taxon>
        <taxon>Fungi incertae sedis</taxon>
        <taxon>Microsporidia</taxon>
        <taxon>Unikaryonidae</taxon>
        <taxon>Encephalitozoon</taxon>
    </lineage>
</organism>